<reference key="1">
    <citation type="journal article" date="2012" name="Nature">
        <title>Analysis of the bread wheat genome using whole-genome shotgun sequencing.</title>
        <authorList>
            <person name="Brenchley R."/>
            <person name="Spannagl M."/>
            <person name="Pfeifer M."/>
            <person name="Barker G.L."/>
            <person name="D'Amore R."/>
            <person name="Allen A.M."/>
            <person name="McKenzie N."/>
            <person name="Kramer M."/>
            <person name="Kerhornou A."/>
            <person name="Bolser D."/>
            <person name="Kay S."/>
            <person name="Waite D."/>
            <person name="Trick M."/>
            <person name="Bancroft I."/>
            <person name="Gu Y."/>
            <person name="Huo N."/>
            <person name="Luo M.C."/>
            <person name="Sehgal S."/>
            <person name="Gill B."/>
            <person name="Kianian S."/>
            <person name="Anderson O."/>
            <person name="Kersey P."/>
            <person name="Dvorak J."/>
            <person name="McCombie W.R."/>
            <person name="Hall A."/>
            <person name="Mayer K.F."/>
            <person name="Edwards K.J."/>
            <person name="Bevan M.W."/>
            <person name="Hall N."/>
        </authorList>
    </citation>
    <scope>NUCLEOTIDE SEQUENCE [LARGE SCALE GENOMIC DNA]</scope>
    <source>
        <strain>cv. Chinese Spring</strain>
    </source>
</reference>
<keyword id="KW-0028">Amino-acid biosynthesis</keyword>
<keyword id="KW-0150">Chloroplast</keyword>
<keyword id="KW-0368">Histidine biosynthesis</keyword>
<keyword id="KW-0456">Lyase</keyword>
<keyword id="KW-0464">Manganese</keyword>
<keyword id="KW-0479">Metal-binding</keyword>
<keyword id="KW-0934">Plastid</keyword>
<keyword id="KW-1185">Reference proteome</keyword>
<keyword id="KW-0809">Transit peptide</keyword>
<proteinExistence type="inferred from homology"/>
<sequence length="269" mass="28720">MTTAPFLFPSLSRLHSARASSFPKPPVGSGAGVAFPARPYGSSLRLRSSVMAATGVGGNGSPMAPEESTVSSRLGEVKRVTKETNVHVKINLDGTGVANSSTGIPFLDHMLDQLASHGLFDVYVKATGDTHIDDHHSNEDIALAIGTALLQALGDRKGINRFGHFTAPLDEAAVEVILDLSGRPHLSCGLSIPTERVGTYDTQLVEHFFQSLVNTSGMTLHIRQLAGNNSHHIIEATFKAFARALRQATEYDLRRQGTIPSSKGVLSRS</sequence>
<dbReference type="EC" id="4.2.1.19" evidence="1"/>
<dbReference type="RefSeq" id="XP_044326082.1">
    <property type="nucleotide sequence ID" value="XM_044470147.1"/>
</dbReference>
<dbReference type="SMR" id="W5BGD1"/>
<dbReference type="STRING" id="4565.W5BGD1"/>
<dbReference type="PaxDb" id="4565-Traes_2BL_E1F913FC2.2"/>
<dbReference type="EnsemblPlants" id="TraesARI2B03G01042270.1">
    <property type="protein sequence ID" value="TraesARI2B03G01042270.1"/>
    <property type="gene ID" value="TraesARI2B03G01042270"/>
</dbReference>
<dbReference type="EnsemblPlants" id="TraesCS2B02G481000.4">
    <property type="protein sequence ID" value="TraesCS2B02G481000.4"/>
    <property type="gene ID" value="TraesCS2B02G481000"/>
</dbReference>
<dbReference type="EnsemblPlants" id="TraesCS2B03G1216300.2">
    <property type="protein sequence ID" value="TraesCS2B03G1216300.2.CDS"/>
    <property type="gene ID" value="TraesCS2B03G1216300"/>
</dbReference>
<dbReference type="EnsemblPlants" id="TraesJAG2B03G01026660.1">
    <property type="protein sequence ID" value="TraesJAG2B03G01026660.1"/>
    <property type="gene ID" value="TraesJAG2B03G01026660"/>
</dbReference>
<dbReference type="EnsemblPlants" id="TraesKAR2B01G0453740.1">
    <property type="protein sequence ID" value="cds.TraesKAR2B01G0453740.1"/>
    <property type="gene ID" value="TraesKAR2B01G0453740"/>
</dbReference>
<dbReference type="EnsemblPlants" id="TraesLDM2B03G01028070.1">
    <property type="protein sequence ID" value="TraesLDM2B03G01028070.1"/>
    <property type="gene ID" value="TraesLDM2B03G01028070"/>
</dbReference>
<dbReference type="EnsemblPlants" id="TraesMAC2B03G01024680.1">
    <property type="protein sequence ID" value="TraesMAC2B03G01024680.1"/>
    <property type="gene ID" value="TraesMAC2B03G01024680"/>
</dbReference>
<dbReference type="EnsemblPlants" id="TraesNOR2B03G01041440.1">
    <property type="protein sequence ID" value="TraesNOR2B03G01041440.1"/>
    <property type="gene ID" value="TraesNOR2B03G01041440"/>
</dbReference>
<dbReference type="EnsemblPlants" id="TraesPARA_EIv1.0_0503020.1">
    <property type="protein sequence ID" value="TraesPARA_EIv1.0_0503020.1.CDS"/>
    <property type="gene ID" value="TraesPARA_EIv1.0_0503020"/>
</dbReference>
<dbReference type="EnsemblPlants" id="TraesRN2B0101262000.2">
    <property type="protein sequence ID" value="TraesRN2B0101262000.2"/>
    <property type="gene ID" value="TraesRN2B0101262000"/>
</dbReference>
<dbReference type="EnsemblPlants" id="TraesSTA2B03G01022220.1">
    <property type="protein sequence ID" value="TraesSTA2B03G01022220.1"/>
    <property type="gene ID" value="TraesSTA2B03G01022220"/>
</dbReference>
<dbReference type="EnsemblPlants" id="TraesSYM2B03G01041890.1">
    <property type="protein sequence ID" value="TraesSYM2B03G01041890.1"/>
    <property type="gene ID" value="TraesSYM2B03G01041890"/>
</dbReference>
<dbReference type="GeneID" id="123046726"/>
<dbReference type="Gramene" id="TraesARI2B03G01042270.1">
    <property type="protein sequence ID" value="TraesARI2B03G01042270.1"/>
    <property type="gene ID" value="TraesARI2B03G01042270"/>
</dbReference>
<dbReference type="Gramene" id="TraesCS2B02G481000.4">
    <property type="protein sequence ID" value="TraesCS2B02G481000.4"/>
    <property type="gene ID" value="TraesCS2B02G481000"/>
</dbReference>
<dbReference type="Gramene" id="TraesCS2B03G1216300.2">
    <property type="protein sequence ID" value="TraesCS2B03G1216300.2.CDS"/>
    <property type="gene ID" value="TraesCS2B03G1216300"/>
</dbReference>
<dbReference type="Gramene" id="TraesJAG2B03G01026660.1">
    <property type="protein sequence ID" value="TraesJAG2B03G01026660.1"/>
    <property type="gene ID" value="TraesJAG2B03G01026660"/>
</dbReference>
<dbReference type="Gramene" id="TraesKAR2B01G0453740.1">
    <property type="protein sequence ID" value="cds.TraesKAR2B01G0453740.1"/>
    <property type="gene ID" value="TraesKAR2B01G0453740"/>
</dbReference>
<dbReference type="Gramene" id="TraesLDM2B03G01028070.1">
    <property type="protein sequence ID" value="TraesLDM2B03G01028070.1"/>
    <property type="gene ID" value="TraesLDM2B03G01028070"/>
</dbReference>
<dbReference type="Gramene" id="TraesMAC2B03G01024680.1">
    <property type="protein sequence ID" value="TraesMAC2B03G01024680.1"/>
    <property type="gene ID" value="TraesMAC2B03G01024680"/>
</dbReference>
<dbReference type="Gramene" id="TraesNOR2B03G01041440.1">
    <property type="protein sequence ID" value="TraesNOR2B03G01041440.1"/>
    <property type="gene ID" value="TraesNOR2B03G01041440"/>
</dbReference>
<dbReference type="Gramene" id="TraesPARA_EIv1.0_0503020.1">
    <property type="protein sequence ID" value="TraesPARA_EIv1.0_0503020.1.CDS"/>
    <property type="gene ID" value="TraesPARA_EIv1.0_0503020"/>
</dbReference>
<dbReference type="Gramene" id="TraesRN2B0101262000.2">
    <property type="protein sequence ID" value="TraesRN2B0101262000.2"/>
    <property type="gene ID" value="TraesRN2B0101262000"/>
</dbReference>
<dbReference type="Gramene" id="TraesSTA2B03G01022220.1">
    <property type="protein sequence ID" value="TraesSTA2B03G01022220.1"/>
    <property type="gene ID" value="TraesSTA2B03G01022220"/>
</dbReference>
<dbReference type="Gramene" id="TraesSYM2B03G01041890.1">
    <property type="protein sequence ID" value="TraesSYM2B03G01041890.1"/>
    <property type="gene ID" value="TraesSYM2B03G01041890"/>
</dbReference>
<dbReference type="HOGENOM" id="CLU_044308_1_1_1"/>
<dbReference type="OMA" id="GIPFFDH"/>
<dbReference type="UniPathway" id="UPA00031">
    <property type="reaction ID" value="UER00011"/>
</dbReference>
<dbReference type="Proteomes" id="UP000019116">
    <property type="component" value="Chromosome 2B"/>
</dbReference>
<dbReference type="ExpressionAtlas" id="W5BGD1">
    <property type="expression patterns" value="baseline and differential"/>
</dbReference>
<dbReference type="GO" id="GO:0009507">
    <property type="term" value="C:chloroplast"/>
    <property type="evidence" value="ECO:0007669"/>
    <property type="project" value="UniProtKB-SubCell"/>
</dbReference>
<dbReference type="GO" id="GO:0004424">
    <property type="term" value="F:imidazoleglycerol-phosphate dehydratase activity"/>
    <property type="evidence" value="ECO:0000318"/>
    <property type="project" value="GO_Central"/>
</dbReference>
<dbReference type="GO" id="GO:0046872">
    <property type="term" value="F:metal ion binding"/>
    <property type="evidence" value="ECO:0007669"/>
    <property type="project" value="UniProtKB-KW"/>
</dbReference>
<dbReference type="GO" id="GO:0000105">
    <property type="term" value="P:L-histidine biosynthetic process"/>
    <property type="evidence" value="ECO:0000318"/>
    <property type="project" value="GO_Central"/>
</dbReference>
<dbReference type="CDD" id="cd07914">
    <property type="entry name" value="IGPD"/>
    <property type="match status" value="1"/>
</dbReference>
<dbReference type="FunFam" id="3.30.230.40:FF:000002">
    <property type="entry name" value="Imidazoleglycerol-phosphate dehydratase"/>
    <property type="match status" value="1"/>
</dbReference>
<dbReference type="FunFam" id="3.30.230.40:FF:000003">
    <property type="entry name" value="Imidazoleglycerol-phosphate dehydratase HisB"/>
    <property type="match status" value="1"/>
</dbReference>
<dbReference type="Gene3D" id="3.30.230.40">
    <property type="entry name" value="Imidazole glycerol phosphate dehydratase, domain 1"/>
    <property type="match status" value="2"/>
</dbReference>
<dbReference type="HAMAP" id="MF_00076">
    <property type="entry name" value="HisB"/>
    <property type="match status" value="1"/>
</dbReference>
<dbReference type="InterPro" id="IPR038494">
    <property type="entry name" value="IGPD_sf"/>
</dbReference>
<dbReference type="InterPro" id="IPR000807">
    <property type="entry name" value="ImidazoleglycerolP_deHydtase"/>
</dbReference>
<dbReference type="InterPro" id="IPR020565">
    <property type="entry name" value="ImidazoleglycerP_deHydtase_CS"/>
</dbReference>
<dbReference type="InterPro" id="IPR020568">
    <property type="entry name" value="Ribosomal_Su5_D2-typ_SF"/>
</dbReference>
<dbReference type="NCBIfam" id="NF002108">
    <property type="entry name" value="PRK00951.1-3"/>
    <property type="match status" value="1"/>
</dbReference>
<dbReference type="NCBIfam" id="NF002111">
    <property type="entry name" value="PRK00951.2-1"/>
    <property type="match status" value="1"/>
</dbReference>
<dbReference type="NCBIfam" id="NF002114">
    <property type="entry name" value="PRK00951.2-4"/>
    <property type="match status" value="1"/>
</dbReference>
<dbReference type="PANTHER" id="PTHR23133:SF2">
    <property type="entry name" value="IMIDAZOLEGLYCEROL-PHOSPHATE DEHYDRATASE"/>
    <property type="match status" value="1"/>
</dbReference>
<dbReference type="PANTHER" id="PTHR23133">
    <property type="entry name" value="IMIDAZOLEGLYCEROL-PHOSPHATE DEHYDRATASE HIS7"/>
    <property type="match status" value="1"/>
</dbReference>
<dbReference type="Pfam" id="PF00475">
    <property type="entry name" value="IGPD"/>
    <property type="match status" value="1"/>
</dbReference>
<dbReference type="SUPFAM" id="SSF54211">
    <property type="entry name" value="Ribosomal protein S5 domain 2-like"/>
    <property type="match status" value="2"/>
</dbReference>
<dbReference type="PROSITE" id="PS00954">
    <property type="entry name" value="IGP_DEHYDRATASE_1"/>
    <property type="match status" value="1"/>
</dbReference>
<dbReference type="PROSITE" id="PS00955">
    <property type="entry name" value="IGP_DEHYDRATASE_2"/>
    <property type="match status" value="1"/>
</dbReference>
<organism>
    <name type="scientific">Triticum aestivum</name>
    <name type="common">Wheat</name>
    <dbReference type="NCBI Taxonomy" id="4565"/>
    <lineage>
        <taxon>Eukaryota</taxon>
        <taxon>Viridiplantae</taxon>
        <taxon>Streptophyta</taxon>
        <taxon>Embryophyta</taxon>
        <taxon>Tracheophyta</taxon>
        <taxon>Spermatophyta</taxon>
        <taxon>Magnoliopsida</taxon>
        <taxon>Liliopsida</taxon>
        <taxon>Poales</taxon>
        <taxon>Poaceae</taxon>
        <taxon>BOP clade</taxon>
        <taxon>Pooideae</taxon>
        <taxon>Triticodae</taxon>
        <taxon>Triticeae</taxon>
        <taxon>Triticinae</taxon>
        <taxon>Triticum</taxon>
    </lineage>
</organism>
<protein>
    <recommendedName>
        <fullName>Imidazoleglycerol-phosphate dehydratase 2, chloroplastic</fullName>
        <shortName>IGPD 2</shortName>
        <ecNumber evidence="1">4.2.1.19</ecNumber>
    </recommendedName>
</protein>
<comment type="catalytic activity">
    <reaction evidence="1">
        <text>D-erythro-1-(imidazol-4-yl)glycerol 3-phosphate = 3-(imidazol-4-yl)-2-oxopropyl phosphate + H2O</text>
        <dbReference type="Rhea" id="RHEA:11040"/>
        <dbReference type="ChEBI" id="CHEBI:15377"/>
        <dbReference type="ChEBI" id="CHEBI:57766"/>
        <dbReference type="ChEBI" id="CHEBI:58278"/>
        <dbReference type="EC" id="4.2.1.19"/>
    </reaction>
</comment>
<comment type="cofactor">
    <cofactor evidence="1">
        <name>Mn(2+)</name>
        <dbReference type="ChEBI" id="CHEBI:29035"/>
    </cofactor>
    <text evidence="1">Binds 2 manganese ions per subunit.</text>
</comment>
<comment type="pathway">
    <text evidence="1">Amino-acid biosynthesis; L-histidine biosynthesis; L-histidine from 5-phospho-alpha-D-ribose 1-diphosphate: step 6/9.</text>
</comment>
<comment type="subcellular location">
    <subcellularLocation>
        <location evidence="2">Plastid</location>
        <location evidence="2">Chloroplast</location>
    </subcellularLocation>
</comment>
<comment type="similarity">
    <text evidence="3">Belongs to the imidazoleglycerol-phosphate dehydratase family.</text>
</comment>
<name>HIS7B_WHEAT</name>
<accession>W5BGD1</accession>
<feature type="transit peptide" description="Chloroplast" evidence="2">
    <location>
        <begin position="1"/>
        <end position="51"/>
    </location>
</feature>
<feature type="chain" id="PRO_0000445483" description="Imidazoleglycerol-phosphate dehydratase 2, chloroplastic">
    <location>
        <begin position="52"/>
        <end position="269"/>
    </location>
</feature>
<feature type="binding site" evidence="1">
    <location>
        <position position="83"/>
    </location>
    <ligand>
        <name>substrate</name>
    </ligand>
</feature>
<feature type="binding site" evidence="1">
    <location>
        <begin position="109"/>
        <end position="117"/>
    </location>
    <ligand>
        <name>substrate</name>
    </ligand>
</feature>
<feature type="binding site" evidence="1">
    <location>
        <position position="109"/>
    </location>
    <ligand>
        <name>Mn(2+)</name>
        <dbReference type="ChEBI" id="CHEBI:29035"/>
        <label>1</label>
    </ligand>
</feature>
<feature type="binding site" evidence="1">
    <location>
        <begin position="135"/>
        <end position="139"/>
    </location>
    <ligand>
        <name>substrate</name>
    </ligand>
</feature>
<feature type="binding site" evidence="1">
    <location>
        <position position="135"/>
    </location>
    <ligand>
        <name>Mn(2+)</name>
        <dbReference type="ChEBI" id="CHEBI:29035"/>
        <label>2</label>
    </ligand>
</feature>
<feature type="binding site" evidence="1">
    <location>
        <position position="136"/>
    </location>
    <ligand>
        <name>Mn(2+)</name>
        <dbReference type="ChEBI" id="CHEBI:29035"/>
        <label>1</label>
    </ligand>
</feature>
<feature type="binding site" evidence="1">
    <location>
        <position position="139"/>
    </location>
    <ligand>
        <name>Mn(2+)</name>
        <dbReference type="ChEBI" id="CHEBI:29035"/>
        <label>2</label>
    </ligand>
</feature>
<feature type="binding site" evidence="1">
    <location>
        <position position="161"/>
    </location>
    <ligand>
        <name>substrate</name>
    </ligand>
</feature>
<feature type="binding site" evidence="1">
    <location>
        <position position="183"/>
    </location>
    <ligand>
        <name>substrate</name>
    </ligand>
</feature>
<feature type="binding site" evidence="1">
    <location>
        <position position="207"/>
    </location>
    <ligand>
        <name>Mn(2+)</name>
        <dbReference type="ChEBI" id="CHEBI:29035"/>
        <label>2</label>
    </ligand>
</feature>
<feature type="binding site" evidence="1">
    <location>
        <begin position="231"/>
        <end position="239"/>
    </location>
    <ligand>
        <name>substrate</name>
    </ligand>
</feature>
<feature type="binding site" evidence="1">
    <location>
        <position position="231"/>
    </location>
    <ligand>
        <name>Mn(2+)</name>
        <dbReference type="ChEBI" id="CHEBI:29035"/>
        <label>1</label>
    </ligand>
</feature>
<feature type="binding site" evidence="1">
    <location>
        <position position="232"/>
    </location>
    <ligand>
        <name>Mn(2+)</name>
        <dbReference type="ChEBI" id="CHEBI:29035"/>
        <label>2</label>
    </ligand>
</feature>
<feature type="binding site" evidence="1">
    <location>
        <position position="235"/>
    </location>
    <ligand>
        <name>Mn(2+)</name>
        <dbReference type="ChEBI" id="CHEBI:29035"/>
        <label>1</label>
    </ligand>
</feature>
<feature type="binding site" evidence="1">
    <location>
        <begin position="261"/>
        <end position="263"/>
    </location>
    <ligand>
        <name>substrate</name>
    </ligand>
</feature>
<evidence type="ECO:0000250" key="1">
    <source>
        <dbReference type="UniProtKB" id="O23346"/>
    </source>
</evidence>
<evidence type="ECO:0000255" key="2"/>
<evidence type="ECO:0000305" key="3"/>